<gene>
    <name evidence="1" type="primary">trmY</name>
    <name type="ordered locus">PYRAB07510</name>
    <name type="ORF">PAB1866</name>
</gene>
<comment type="function">
    <text evidence="1">Specifically catalyzes the N1-methylation of pseudouridine at position 54 (Psi54) in tRNAs.</text>
</comment>
<comment type="catalytic activity">
    <reaction evidence="1">
        <text>pseudouridine(54) in tRNA + S-adenosyl-L-methionine = N(1)-methylpseudouridine(54) in tRNA + S-adenosyl-L-homocysteine + H(+)</text>
        <dbReference type="Rhea" id="RHEA:55292"/>
        <dbReference type="Rhea" id="RHEA-COMP:14140"/>
        <dbReference type="Rhea" id="RHEA-COMP:14141"/>
        <dbReference type="ChEBI" id="CHEBI:15378"/>
        <dbReference type="ChEBI" id="CHEBI:57856"/>
        <dbReference type="ChEBI" id="CHEBI:59789"/>
        <dbReference type="ChEBI" id="CHEBI:65314"/>
        <dbReference type="ChEBI" id="CHEBI:74890"/>
        <dbReference type="EC" id="2.1.1.257"/>
    </reaction>
</comment>
<comment type="subunit">
    <text evidence="1">Homodimer.</text>
</comment>
<comment type="subcellular location">
    <subcellularLocation>
        <location evidence="1">Cytoplasm</location>
    </subcellularLocation>
</comment>
<comment type="similarity">
    <text evidence="1">Belongs to the methyltransferase superfamily. TrmY family.</text>
</comment>
<keyword id="KW-0963">Cytoplasm</keyword>
<keyword id="KW-0489">Methyltransferase</keyword>
<keyword id="KW-0949">S-adenosyl-L-methionine</keyword>
<keyword id="KW-0808">Transferase</keyword>
<keyword id="KW-0819">tRNA processing</keyword>
<evidence type="ECO:0000255" key="1">
    <source>
        <dbReference type="HAMAP-Rule" id="MF_00587"/>
    </source>
</evidence>
<sequence length="204" mass="22806">MRVFIIKANEAHTANDFSLKDLPGTSGRIDLICRALNSAFHLSHSFRKNVRVYVTLLGPPDPPKSLRFEGPELKPKILNPDELSTAKIIGKALERGKDIKRKSTEEIKVLPGIYVSNMSFEDVIRVVIKRFPLYILEEDGKDITEVEFPKNNVAFVLGDHIGLSSEDLSFLESVGMKVSIGPKAYLTSHVIAYVNIYLDRLGIP</sequence>
<organism>
    <name type="scientific">Pyrococcus abyssi (strain GE5 / Orsay)</name>
    <dbReference type="NCBI Taxonomy" id="272844"/>
    <lineage>
        <taxon>Archaea</taxon>
        <taxon>Methanobacteriati</taxon>
        <taxon>Methanobacteriota</taxon>
        <taxon>Thermococci</taxon>
        <taxon>Thermococcales</taxon>
        <taxon>Thermococcaceae</taxon>
        <taxon>Pyrococcus</taxon>
    </lineage>
</organism>
<dbReference type="EC" id="2.1.1.257" evidence="1"/>
<dbReference type="EMBL" id="AJ248285">
    <property type="protein sequence ID" value="CAB49665.1"/>
    <property type="molecule type" value="Genomic_DNA"/>
</dbReference>
<dbReference type="EMBL" id="HE613800">
    <property type="protein sequence ID" value="CCE70147.1"/>
    <property type="molecule type" value="Genomic_DNA"/>
</dbReference>
<dbReference type="PIR" id="H75118">
    <property type="entry name" value="H75118"/>
</dbReference>
<dbReference type="RefSeq" id="WP_010867873.1">
    <property type="nucleotide sequence ID" value="NC_000868.1"/>
</dbReference>
<dbReference type="SMR" id="Q9V0N8"/>
<dbReference type="STRING" id="272844.PAB1866"/>
<dbReference type="KEGG" id="pab:PAB1866"/>
<dbReference type="PATRIC" id="fig|272844.11.peg.791"/>
<dbReference type="eggNOG" id="arCOG01239">
    <property type="taxonomic scope" value="Archaea"/>
</dbReference>
<dbReference type="HOGENOM" id="CLU_107018_0_0_2"/>
<dbReference type="OrthoDB" id="27492at2157"/>
<dbReference type="PhylomeDB" id="Q9V0N8"/>
<dbReference type="Proteomes" id="UP000000810">
    <property type="component" value="Chromosome"/>
</dbReference>
<dbReference type="Proteomes" id="UP000009139">
    <property type="component" value="Chromosome"/>
</dbReference>
<dbReference type="GO" id="GO:0005737">
    <property type="term" value="C:cytoplasm"/>
    <property type="evidence" value="ECO:0007669"/>
    <property type="project" value="UniProtKB-SubCell"/>
</dbReference>
<dbReference type="GO" id="GO:0008757">
    <property type="term" value="F:S-adenosylmethionine-dependent methyltransferase activity"/>
    <property type="evidence" value="ECO:0007669"/>
    <property type="project" value="UniProtKB-UniRule"/>
</dbReference>
<dbReference type="GO" id="GO:0008175">
    <property type="term" value="F:tRNA methyltransferase activity"/>
    <property type="evidence" value="ECO:0007669"/>
    <property type="project" value="UniProtKB-UniRule"/>
</dbReference>
<dbReference type="GO" id="GO:0030488">
    <property type="term" value="P:tRNA methylation"/>
    <property type="evidence" value="ECO:0007669"/>
    <property type="project" value="UniProtKB-UniRule"/>
</dbReference>
<dbReference type="CDD" id="cd18087">
    <property type="entry name" value="TrmY-like"/>
    <property type="match status" value="1"/>
</dbReference>
<dbReference type="Gene3D" id="3.40.1280.10">
    <property type="match status" value="1"/>
</dbReference>
<dbReference type="HAMAP" id="MF_00587">
    <property type="entry name" value="tRNA_methyltr_TrmY"/>
    <property type="match status" value="1"/>
</dbReference>
<dbReference type="InterPro" id="IPR029028">
    <property type="entry name" value="Alpha/beta_knot_MTases"/>
</dbReference>
<dbReference type="InterPro" id="IPR007158">
    <property type="entry name" value="TrmY"/>
</dbReference>
<dbReference type="InterPro" id="IPR029026">
    <property type="entry name" value="tRNA_m1G_MTases_N"/>
</dbReference>
<dbReference type="NCBIfam" id="NF002560">
    <property type="entry name" value="PRK02135.1"/>
    <property type="match status" value="1"/>
</dbReference>
<dbReference type="PANTHER" id="PTHR40703">
    <property type="entry name" value="TRNA (PSEUDOURIDINE(54)-N(1))-METHYLTRANSFERASE"/>
    <property type="match status" value="1"/>
</dbReference>
<dbReference type="PANTHER" id="PTHR40703:SF1">
    <property type="entry name" value="TRNA (PSEUDOURIDINE(54)-N(1))-METHYLTRANSFERASE"/>
    <property type="match status" value="1"/>
</dbReference>
<dbReference type="Pfam" id="PF04013">
    <property type="entry name" value="Methyltrn_RNA_2"/>
    <property type="match status" value="1"/>
</dbReference>
<dbReference type="SUPFAM" id="SSF75217">
    <property type="entry name" value="alpha/beta knot"/>
    <property type="match status" value="1"/>
</dbReference>
<accession>Q9V0N8</accession>
<accession>G8ZGV2</accession>
<reference key="1">
    <citation type="journal article" date="2003" name="Mol. Microbiol.">
        <title>An integrated analysis of the genome of the hyperthermophilic archaeon Pyrococcus abyssi.</title>
        <authorList>
            <person name="Cohen G.N."/>
            <person name="Barbe V."/>
            <person name="Flament D."/>
            <person name="Galperin M."/>
            <person name="Heilig R."/>
            <person name="Lecompte O."/>
            <person name="Poch O."/>
            <person name="Prieur D."/>
            <person name="Querellou J."/>
            <person name="Ripp R."/>
            <person name="Thierry J.-C."/>
            <person name="Van der Oost J."/>
            <person name="Weissenbach J."/>
            <person name="Zivanovic Y."/>
            <person name="Forterre P."/>
        </authorList>
    </citation>
    <scope>NUCLEOTIDE SEQUENCE [LARGE SCALE GENOMIC DNA]</scope>
    <source>
        <strain>GE5 / Orsay</strain>
    </source>
</reference>
<reference key="2">
    <citation type="journal article" date="2012" name="Curr. Microbiol.">
        <title>Re-annotation of two hyperthermophilic archaea Pyrococcus abyssi GE5 and Pyrococcus furiosus DSM 3638.</title>
        <authorList>
            <person name="Gao J."/>
            <person name="Wang J."/>
        </authorList>
    </citation>
    <scope>GENOME REANNOTATION</scope>
    <source>
        <strain>GE5 / Orsay</strain>
    </source>
</reference>
<proteinExistence type="inferred from homology"/>
<feature type="chain" id="PRO_0000157951" description="tRNA (pseudouridine(54)-N(1))-methyltransferase">
    <location>
        <begin position="1"/>
        <end position="204"/>
    </location>
</feature>
<feature type="binding site" evidence="1">
    <location>
        <position position="136"/>
    </location>
    <ligand>
        <name>S-adenosyl-L-methionine</name>
        <dbReference type="ChEBI" id="CHEBI:59789"/>
    </ligand>
</feature>
<feature type="binding site" evidence="1">
    <location>
        <position position="158"/>
    </location>
    <ligand>
        <name>S-adenosyl-L-methionine</name>
        <dbReference type="ChEBI" id="CHEBI:59789"/>
    </ligand>
</feature>
<protein>
    <recommendedName>
        <fullName evidence="1">tRNA (pseudouridine(54)-N(1))-methyltransferase</fullName>
        <ecNumber evidence="1">2.1.1.257</ecNumber>
    </recommendedName>
</protein>
<name>TRMY_PYRAB</name>